<proteinExistence type="inferred from homology"/>
<accession>A4YW97</accession>
<dbReference type="EC" id="2.1.2.1" evidence="1"/>
<dbReference type="EMBL" id="CU234118">
    <property type="protein sequence ID" value="CAL78173.1"/>
    <property type="molecule type" value="Genomic_DNA"/>
</dbReference>
<dbReference type="RefSeq" id="WP_011927288.1">
    <property type="nucleotide sequence ID" value="NC_009445.1"/>
</dbReference>
<dbReference type="SMR" id="A4YW97"/>
<dbReference type="STRING" id="114615.BRADO4430"/>
<dbReference type="KEGG" id="bra:BRADO4430"/>
<dbReference type="eggNOG" id="COG0112">
    <property type="taxonomic scope" value="Bacteria"/>
</dbReference>
<dbReference type="HOGENOM" id="CLU_022477_2_1_5"/>
<dbReference type="OrthoDB" id="9803846at2"/>
<dbReference type="UniPathway" id="UPA00193"/>
<dbReference type="UniPathway" id="UPA00288">
    <property type="reaction ID" value="UER01023"/>
</dbReference>
<dbReference type="Proteomes" id="UP000001994">
    <property type="component" value="Chromosome"/>
</dbReference>
<dbReference type="GO" id="GO:0005829">
    <property type="term" value="C:cytosol"/>
    <property type="evidence" value="ECO:0007669"/>
    <property type="project" value="TreeGrafter"/>
</dbReference>
<dbReference type="GO" id="GO:0004372">
    <property type="term" value="F:glycine hydroxymethyltransferase activity"/>
    <property type="evidence" value="ECO:0007669"/>
    <property type="project" value="UniProtKB-UniRule"/>
</dbReference>
<dbReference type="GO" id="GO:0030170">
    <property type="term" value="F:pyridoxal phosphate binding"/>
    <property type="evidence" value="ECO:0007669"/>
    <property type="project" value="UniProtKB-UniRule"/>
</dbReference>
<dbReference type="GO" id="GO:0019264">
    <property type="term" value="P:glycine biosynthetic process from serine"/>
    <property type="evidence" value="ECO:0007669"/>
    <property type="project" value="UniProtKB-UniRule"/>
</dbReference>
<dbReference type="GO" id="GO:0035999">
    <property type="term" value="P:tetrahydrofolate interconversion"/>
    <property type="evidence" value="ECO:0007669"/>
    <property type="project" value="UniProtKB-UniRule"/>
</dbReference>
<dbReference type="CDD" id="cd00378">
    <property type="entry name" value="SHMT"/>
    <property type="match status" value="1"/>
</dbReference>
<dbReference type="FunFam" id="3.40.640.10:FF:000001">
    <property type="entry name" value="Serine hydroxymethyltransferase"/>
    <property type="match status" value="1"/>
</dbReference>
<dbReference type="FunFam" id="3.90.1150.10:FF:000003">
    <property type="entry name" value="Serine hydroxymethyltransferase"/>
    <property type="match status" value="1"/>
</dbReference>
<dbReference type="Gene3D" id="3.90.1150.10">
    <property type="entry name" value="Aspartate Aminotransferase, domain 1"/>
    <property type="match status" value="1"/>
</dbReference>
<dbReference type="Gene3D" id="3.40.640.10">
    <property type="entry name" value="Type I PLP-dependent aspartate aminotransferase-like (Major domain)"/>
    <property type="match status" value="1"/>
</dbReference>
<dbReference type="HAMAP" id="MF_00051">
    <property type="entry name" value="SHMT"/>
    <property type="match status" value="1"/>
</dbReference>
<dbReference type="InterPro" id="IPR015424">
    <property type="entry name" value="PyrdxlP-dep_Trfase"/>
</dbReference>
<dbReference type="InterPro" id="IPR015421">
    <property type="entry name" value="PyrdxlP-dep_Trfase_major"/>
</dbReference>
<dbReference type="InterPro" id="IPR015422">
    <property type="entry name" value="PyrdxlP-dep_Trfase_small"/>
</dbReference>
<dbReference type="InterPro" id="IPR001085">
    <property type="entry name" value="Ser_HO-MeTrfase"/>
</dbReference>
<dbReference type="InterPro" id="IPR049943">
    <property type="entry name" value="Ser_HO-MeTrfase-like"/>
</dbReference>
<dbReference type="InterPro" id="IPR019798">
    <property type="entry name" value="Ser_HO-MeTrfase_PLP_BS"/>
</dbReference>
<dbReference type="InterPro" id="IPR039429">
    <property type="entry name" value="SHMT-like_dom"/>
</dbReference>
<dbReference type="NCBIfam" id="NF000586">
    <property type="entry name" value="PRK00011.1"/>
    <property type="match status" value="1"/>
</dbReference>
<dbReference type="PANTHER" id="PTHR11680">
    <property type="entry name" value="SERINE HYDROXYMETHYLTRANSFERASE"/>
    <property type="match status" value="1"/>
</dbReference>
<dbReference type="PANTHER" id="PTHR11680:SF35">
    <property type="entry name" value="SERINE HYDROXYMETHYLTRANSFERASE 1"/>
    <property type="match status" value="1"/>
</dbReference>
<dbReference type="Pfam" id="PF00464">
    <property type="entry name" value="SHMT"/>
    <property type="match status" value="1"/>
</dbReference>
<dbReference type="PIRSF" id="PIRSF000412">
    <property type="entry name" value="SHMT"/>
    <property type="match status" value="1"/>
</dbReference>
<dbReference type="SUPFAM" id="SSF53383">
    <property type="entry name" value="PLP-dependent transferases"/>
    <property type="match status" value="1"/>
</dbReference>
<dbReference type="PROSITE" id="PS00096">
    <property type="entry name" value="SHMT"/>
    <property type="match status" value="1"/>
</dbReference>
<protein>
    <recommendedName>
        <fullName evidence="1">Serine hydroxymethyltransferase</fullName>
        <shortName evidence="1">SHMT</shortName>
        <shortName evidence="1">Serine methylase</shortName>
        <ecNumber evidence="1">2.1.2.1</ecNumber>
    </recommendedName>
</protein>
<feature type="chain" id="PRO_1000006226" description="Serine hydroxymethyltransferase">
    <location>
        <begin position="1"/>
        <end position="433"/>
    </location>
</feature>
<feature type="binding site" evidence="1">
    <location>
        <position position="132"/>
    </location>
    <ligand>
        <name>(6S)-5,6,7,8-tetrahydrofolate</name>
        <dbReference type="ChEBI" id="CHEBI:57453"/>
    </ligand>
</feature>
<feature type="binding site" evidence="1">
    <location>
        <begin position="136"/>
        <end position="138"/>
    </location>
    <ligand>
        <name>(6S)-5,6,7,8-tetrahydrofolate</name>
        <dbReference type="ChEBI" id="CHEBI:57453"/>
    </ligand>
</feature>
<feature type="site" description="Plays an important role in substrate specificity" evidence="1">
    <location>
        <position position="240"/>
    </location>
</feature>
<feature type="modified residue" description="N6-(pyridoxal phosphate)lysine" evidence="1">
    <location>
        <position position="241"/>
    </location>
</feature>
<gene>
    <name evidence="1" type="primary">glyA</name>
    <name type="ordered locus">BRADO4430</name>
</gene>
<name>GLYA_BRASO</name>
<sequence>MTASAKPVSSVDSFFSATLAEADPEIAAAIRGELGRQRHEIELIASENIVSRAVLEAQGSVMTNKYAEGYPGARYYGGCEWVDVAENLAIDRAKKLFGANFANVQPNSGSQMNQAVFLALLQPGDTFMGLDLAAGGHLTHGSPVNMSGKWFKAAHYTVRRDDHLIDMDAVAKQAEEVKPKLIIAGGSAYSRPWDFKRFREIADSVGAYLLVDMAHFAGLVAGGVHASPVPYAHITTTTTHKSLRGPRGGLMLWNDEQFTKKFNSAIFPGLQGGPLMHVIAAKAVAFAEALRPEFKAYAKNVVENAKALAESLRAQGFDIVSGGTDNHLMLVDLRPKGLKGNVSEKALVRAAITCNKNGIPFDPEKPFVTSGLRLGTPAATTRGFGVAEFQQVGSLIAEVLNAIAQGPDGSAPLVEAAVKEKVKALTDRFPIYQ</sequence>
<reference key="1">
    <citation type="journal article" date="2007" name="Science">
        <title>Legumes symbioses: absence of nod genes in photosynthetic bradyrhizobia.</title>
        <authorList>
            <person name="Giraud E."/>
            <person name="Moulin L."/>
            <person name="Vallenet D."/>
            <person name="Barbe V."/>
            <person name="Cytryn E."/>
            <person name="Avarre J.-C."/>
            <person name="Jaubert M."/>
            <person name="Simon D."/>
            <person name="Cartieaux F."/>
            <person name="Prin Y."/>
            <person name="Bena G."/>
            <person name="Hannibal L."/>
            <person name="Fardoux J."/>
            <person name="Kojadinovic M."/>
            <person name="Vuillet L."/>
            <person name="Lajus A."/>
            <person name="Cruveiller S."/>
            <person name="Rouy Z."/>
            <person name="Mangenot S."/>
            <person name="Segurens B."/>
            <person name="Dossat C."/>
            <person name="Franck W.L."/>
            <person name="Chang W.-S."/>
            <person name="Saunders E."/>
            <person name="Bruce D."/>
            <person name="Richardson P."/>
            <person name="Normand P."/>
            <person name="Dreyfus B."/>
            <person name="Pignol D."/>
            <person name="Stacey G."/>
            <person name="Emerich D."/>
            <person name="Vermeglio A."/>
            <person name="Medigue C."/>
            <person name="Sadowsky M."/>
        </authorList>
    </citation>
    <scope>NUCLEOTIDE SEQUENCE [LARGE SCALE GENOMIC DNA]</scope>
    <source>
        <strain>ORS 278</strain>
    </source>
</reference>
<evidence type="ECO:0000255" key="1">
    <source>
        <dbReference type="HAMAP-Rule" id="MF_00051"/>
    </source>
</evidence>
<organism>
    <name type="scientific">Bradyrhizobium sp. (strain ORS 278)</name>
    <dbReference type="NCBI Taxonomy" id="114615"/>
    <lineage>
        <taxon>Bacteria</taxon>
        <taxon>Pseudomonadati</taxon>
        <taxon>Pseudomonadota</taxon>
        <taxon>Alphaproteobacteria</taxon>
        <taxon>Hyphomicrobiales</taxon>
        <taxon>Nitrobacteraceae</taxon>
        <taxon>Bradyrhizobium</taxon>
    </lineage>
</organism>
<comment type="function">
    <text evidence="1">Catalyzes the reversible interconversion of serine and glycine with tetrahydrofolate (THF) serving as the one-carbon carrier. This reaction serves as the major source of one-carbon groups required for the biosynthesis of purines, thymidylate, methionine, and other important biomolecules. Also exhibits THF-independent aldolase activity toward beta-hydroxyamino acids, producing glycine and aldehydes, via a retro-aldol mechanism.</text>
</comment>
<comment type="catalytic activity">
    <reaction evidence="1">
        <text>(6R)-5,10-methylene-5,6,7,8-tetrahydrofolate + glycine + H2O = (6S)-5,6,7,8-tetrahydrofolate + L-serine</text>
        <dbReference type="Rhea" id="RHEA:15481"/>
        <dbReference type="ChEBI" id="CHEBI:15377"/>
        <dbReference type="ChEBI" id="CHEBI:15636"/>
        <dbReference type="ChEBI" id="CHEBI:33384"/>
        <dbReference type="ChEBI" id="CHEBI:57305"/>
        <dbReference type="ChEBI" id="CHEBI:57453"/>
        <dbReference type="EC" id="2.1.2.1"/>
    </reaction>
</comment>
<comment type="cofactor">
    <cofactor evidence="1">
        <name>pyridoxal 5'-phosphate</name>
        <dbReference type="ChEBI" id="CHEBI:597326"/>
    </cofactor>
</comment>
<comment type="pathway">
    <text evidence="1">One-carbon metabolism; tetrahydrofolate interconversion.</text>
</comment>
<comment type="pathway">
    <text evidence="1">Amino-acid biosynthesis; glycine biosynthesis; glycine from L-serine: step 1/1.</text>
</comment>
<comment type="subunit">
    <text evidence="1">Homodimer.</text>
</comment>
<comment type="subcellular location">
    <subcellularLocation>
        <location evidence="1">Cytoplasm</location>
    </subcellularLocation>
</comment>
<comment type="similarity">
    <text evidence="1">Belongs to the SHMT family.</text>
</comment>
<keyword id="KW-0028">Amino-acid biosynthesis</keyword>
<keyword id="KW-0963">Cytoplasm</keyword>
<keyword id="KW-0554">One-carbon metabolism</keyword>
<keyword id="KW-0663">Pyridoxal phosphate</keyword>
<keyword id="KW-1185">Reference proteome</keyword>
<keyword id="KW-0808">Transferase</keyword>